<proteinExistence type="inferred from homology"/>
<sequence length="397" mass="42983">MTTLLNPYFGEFGGMYVPQILMPALRQLEEAFVSAQKDPEFQAQFNDLLKNYAGRPTALTKCQNITAGTNTTLYLKREDLLHGGAHKTNQVLGQALLAKRMGKTEIIAETGAGQHGVASALASALLGLKCRIYMGAKDVERQSPNVFRMRLMGAEVIPVHSGSATLKDACNEALRDWSGSYETAHYMLGTAAGPHPYPTIVREFQRMIGEETKAQILEREGRLPDAVIACVGGGSNAIGMFADFINETNVGLIGVEPGGHGIETGEHGAPLKHGRVGIYFGMKAPMMQTEDGQIEESYSISAGLDFPSVGPQHAYLNSTGRADYVSITDDEALEAFKTLCLHEGIIPALESSHALAHALKMMRENPDKEQLLVVNLSGRGDKDIFTVHDILKARGEI</sequence>
<feature type="chain" id="PRO_1000117755" description="Tryptophan synthase beta chain">
    <location>
        <begin position="1"/>
        <end position="397"/>
    </location>
</feature>
<feature type="modified residue" description="N6-(pyridoxal phosphate)lysine" evidence="1">
    <location>
        <position position="87"/>
    </location>
</feature>
<comment type="function">
    <text evidence="1">The beta subunit is responsible for the synthesis of L-tryptophan from indole and L-serine.</text>
</comment>
<comment type="catalytic activity">
    <reaction evidence="1">
        <text>(1S,2R)-1-C-(indol-3-yl)glycerol 3-phosphate + L-serine = D-glyceraldehyde 3-phosphate + L-tryptophan + H2O</text>
        <dbReference type="Rhea" id="RHEA:10532"/>
        <dbReference type="ChEBI" id="CHEBI:15377"/>
        <dbReference type="ChEBI" id="CHEBI:33384"/>
        <dbReference type="ChEBI" id="CHEBI:57912"/>
        <dbReference type="ChEBI" id="CHEBI:58866"/>
        <dbReference type="ChEBI" id="CHEBI:59776"/>
        <dbReference type="EC" id="4.2.1.20"/>
    </reaction>
</comment>
<comment type="cofactor">
    <cofactor evidence="1">
        <name>pyridoxal 5'-phosphate</name>
        <dbReference type="ChEBI" id="CHEBI:597326"/>
    </cofactor>
</comment>
<comment type="pathway">
    <text evidence="1">Amino-acid biosynthesis; L-tryptophan biosynthesis; L-tryptophan from chorismate: step 5/5.</text>
</comment>
<comment type="subunit">
    <text evidence="1">Tetramer of two alpha and two beta chains.</text>
</comment>
<comment type="similarity">
    <text evidence="1">Belongs to the TrpB family.</text>
</comment>
<name>TRPB_ECO8A</name>
<gene>
    <name evidence="1" type="primary">trpB</name>
    <name type="ordered locus">ECIAI1_1281</name>
</gene>
<dbReference type="EC" id="4.2.1.20" evidence="1"/>
<dbReference type="EMBL" id="CU928160">
    <property type="protein sequence ID" value="CAQ98140.1"/>
    <property type="molecule type" value="Genomic_DNA"/>
</dbReference>
<dbReference type="RefSeq" id="WP_000209520.1">
    <property type="nucleotide sequence ID" value="NC_011741.1"/>
</dbReference>
<dbReference type="SMR" id="B7LY17"/>
<dbReference type="GeneID" id="75203373"/>
<dbReference type="KEGG" id="ecr:ECIAI1_1281"/>
<dbReference type="HOGENOM" id="CLU_016734_3_1_6"/>
<dbReference type="UniPathway" id="UPA00035">
    <property type="reaction ID" value="UER00044"/>
</dbReference>
<dbReference type="GO" id="GO:0005737">
    <property type="term" value="C:cytoplasm"/>
    <property type="evidence" value="ECO:0007669"/>
    <property type="project" value="TreeGrafter"/>
</dbReference>
<dbReference type="GO" id="GO:0004834">
    <property type="term" value="F:tryptophan synthase activity"/>
    <property type="evidence" value="ECO:0007669"/>
    <property type="project" value="UniProtKB-UniRule"/>
</dbReference>
<dbReference type="CDD" id="cd06446">
    <property type="entry name" value="Trp-synth_B"/>
    <property type="match status" value="1"/>
</dbReference>
<dbReference type="FunFam" id="3.40.50.1100:FF:000001">
    <property type="entry name" value="Tryptophan synthase beta chain"/>
    <property type="match status" value="1"/>
</dbReference>
<dbReference type="FunFam" id="3.40.50.1100:FF:000004">
    <property type="entry name" value="Tryptophan synthase beta chain"/>
    <property type="match status" value="1"/>
</dbReference>
<dbReference type="Gene3D" id="3.40.50.1100">
    <property type="match status" value="2"/>
</dbReference>
<dbReference type="HAMAP" id="MF_00133">
    <property type="entry name" value="Trp_synth_beta"/>
    <property type="match status" value="1"/>
</dbReference>
<dbReference type="InterPro" id="IPR006653">
    <property type="entry name" value="Trp_synth_b_CS"/>
</dbReference>
<dbReference type="InterPro" id="IPR006654">
    <property type="entry name" value="Trp_synth_beta"/>
</dbReference>
<dbReference type="InterPro" id="IPR023026">
    <property type="entry name" value="Trp_synth_beta/beta-like"/>
</dbReference>
<dbReference type="InterPro" id="IPR001926">
    <property type="entry name" value="TrpB-like_PALP"/>
</dbReference>
<dbReference type="InterPro" id="IPR036052">
    <property type="entry name" value="TrpB-like_PALP_sf"/>
</dbReference>
<dbReference type="NCBIfam" id="TIGR00263">
    <property type="entry name" value="trpB"/>
    <property type="match status" value="1"/>
</dbReference>
<dbReference type="PANTHER" id="PTHR48077:SF3">
    <property type="entry name" value="TRYPTOPHAN SYNTHASE"/>
    <property type="match status" value="1"/>
</dbReference>
<dbReference type="PANTHER" id="PTHR48077">
    <property type="entry name" value="TRYPTOPHAN SYNTHASE-RELATED"/>
    <property type="match status" value="1"/>
</dbReference>
<dbReference type="Pfam" id="PF00291">
    <property type="entry name" value="PALP"/>
    <property type="match status" value="1"/>
</dbReference>
<dbReference type="PIRSF" id="PIRSF001413">
    <property type="entry name" value="Trp_syn_beta"/>
    <property type="match status" value="1"/>
</dbReference>
<dbReference type="SUPFAM" id="SSF53686">
    <property type="entry name" value="Tryptophan synthase beta subunit-like PLP-dependent enzymes"/>
    <property type="match status" value="1"/>
</dbReference>
<dbReference type="PROSITE" id="PS00168">
    <property type="entry name" value="TRP_SYNTHASE_BETA"/>
    <property type="match status" value="1"/>
</dbReference>
<reference key="1">
    <citation type="journal article" date="2009" name="PLoS Genet.">
        <title>Organised genome dynamics in the Escherichia coli species results in highly diverse adaptive paths.</title>
        <authorList>
            <person name="Touchon M."/>
            <person name="Hoede C."/>
            <person name="Tenaillon O."/>
            <person name="Barbe V."/>
            <person name="Baeriswyl S."/>
            <person name="Bidet P."/>
            <person name="Bingen E."/>
            <person name="Bonacorsi S."/>
            <person name="Bouchier C."/>
            <person name="Bouvet O."/>
            <person name="Calteau A."/>
            <person name="Chiapello H."/>
            <person name="Clermont O."/>
            <person name="Cruveiller S."/>
            <person name="Danchin A."/>
            <person name="Diard M."/>
            <person name="Dossat C."/>
            <person name="Karoui M.E."/>
            <person name="Frapy E."/>
            <person name="Garry L."/>
            <person name="Ghigo J.M."/>
            <person name="Gilles A.M."/>
            <person name="Johnson J."/>
            <person name="Le Bouguenec C."/>
            <person name="Lescat M."/>
            <person name="Mangenot S."/>
            <person name="Martinez-Jehanne V."/>
            <person name="Matic I."/>
            <person name="Nassif X."/>
            <person name="Oztas S."/>
            <person name="Petit M.A."/>
            <person name="Pichon C."/>
            <person name="Rouy Z."/>
            <person name="Ruf C.S."/>
            <person name="Schneider D."/>
            <person name="Tourret J."/>
            <person name="Vacherie B."/>
            <person name="Vallenet D."/>
            <person name="Medigue C."/>
            <person name="Rocha E.P.C."/>
            <person name="Denamur E."/>
        </authorList>
    </citation>
    <scope>NUCLEOTIDE SEQUENCE [LARGE SCALE GENOMIC DNA]</scope>
    <source>
        <strain>IAI1</strain>
    </source>
</reference>
<keyword id="KW-0028">Amino-acid biosynthesis</keyword>
<keyword id="KW-0057">Aromatic amino acid biosynthesis</keyword>
<keyword id="KW-0456">Lyase</keyword>
<keyword id="KW-0663">Pyridoxal phosphate</keyword>
<keyword id="KW-0822">Tryptophan biosynthesis</keyword>
<organism>
    <name type="scientific">Escherichia coli O8 (strain IAI1)</name>
    <dbReference type="NCBI Taxonomy" id="585034"/>
    <lineage>
        <taxon>Bacteria</taxon>
        <taxon>Pseudomonadati</taxon>
        <taxon>Pseudomonadota</taxon>
        <taxon>Gammaproteobacteria</taxon>
        <taxon>Enterobacterales</taxon>
        <taxon>Enterobacteriaceae</taxon>
        <taxon>Escherichia</taxon>
    </lineage>
</organism>
<accession>B7LY17</accession>
<protein>
    <recommendedName>
        <fullName evidence="1">Tryptophan synthase beta chain</fullName>
        <ecNumber evidence="1">4.2.1.20</ecNumber>
    </recommendedName>
</protein>
<evidence type="ECO:0000255" key="1">
    <source>
        <dbReference type="HAMAP-Rule" id="MF_00133"/>
    </source>
</evidence>